<feature type="chain" id="PRO_0000172607" description="Phosphatidylglycerol--prolipoprotein diacylglyceryl transferase">
    <location>
        <begin position="1"/>
        <end position="269"/>
    </location>
</feature>
<feature type="transmembrane region" description="Helical" evidence="1">
    <location>
        <begin position="14"/>
        <end position="34"/>
    </location>
</feature>
<feature type="transmembrane region" description="Helical" evidence="1">
    <location>
        <begin position="49"/>
        <end position="69"/>
    </location>
</feature>
<feature type="transmembrane region" description="Helical" evidence="1">
    <location>
        <begin position="89"/>
        <end position="109"/>
    </location>
</feature>
<feature type="transmembrane region" description="Helical" evidence="1">
    <location>
        <begin position="118"/>
        <end position="138"/>
    </location>
</feature>
<feature type="transmembrane region" description="Helical" evidence="1">
    <location>
        <begin position="180"/>
        <end position="200"/>
    </location>
</feature>
<feature type="transmembrane region" description="Helical" evidence="1">
    <location>
        <begin position="208"/>
        <end position="228"/>
    </location>
</feature>
<feature type="transmembrane region" description="Helical" evidence="1">
    <location>
        <begin position="240"/>
        <end position="260"/>
    </location>
</feature>
<feature type="binding site" evidence="1">
    <location>
        <position position="140"/>
    </location>
    <ligand>
        <name>a 1,2-diacyl-sn-glycero-3-phospho-(1'-sn-glycerol)</name>
        <dbReference type="ChEBI" id="CHEBI:64716"/>
    </ligand>
</feature>
<sequence>MPMETGFTSPGPLIVQIGGFAVRWYSLLILAGIIAGTLLSQKLAPERKVAPEVLSDLVVWLVVGAIPMARLYYVLFEWQRFAGEPWWKVFAIWEGGIAIHGAILGGLLAGWLFCRRNGYSLLTMIDLAAPGLILGQAIGRWGNFFNSEAYGAPTNLPWKLFIPEANRPPGMAAFAYYHPTFLYESLWNLGVLALLLFVFFRFKNLRPGSIACLYALAYSVGRFWIEGLRLDSLMVGPLRTAQLVSLAGIVLGAVGLWWLNRRSARQEAP</sequence>
<dbReference type="EC" id="2.5.1.145" evidence="1"/>
<dbReference type="EMBL" id="BA000045">
    <property type="protein sequence ID" value="BAC92334.1"/>
    <property type="molecule type" value="Genomic_DNA"/>
</dbReference>
<dbReference type="RefSeq" id="NP_927339.1">
    <property type="nucleotide sequence ID" value="NC_005125.1"/>
</dbReference>
<dbReference type="SMR" id="Q7ND43"/>
<dbReference type="FunCoup" id="Q7ND43">
    <property type="interactions" value="12"/>
</dbReference>
<dbReference type="STRING" id="251221.gene:10761912"/>
<dbReference type="EnsemblBacteria" id="BAC92334">
    <property type="protein sequence ID" value="BAC92334"/>
    <property type="gene ID" value="BAC92334"/>
</dbReference>
<dbReference type="KEGG" id="gvi:gll4393"/>
<dbReference type="PATRIC" id="fig|251221.4.peg.4422"/>
<dbReference type="eggNOG" id="COG0682">
    <property type="taxonomic scope" value="Bacteria"/>
</dbReference>
<dbReference type="HOGENOM" id="CLU_013386_1_2_3"/>
<dbReference type="InParanoid" id="Q7ND43"/>
<dbReference type="OrthoDB" id="871140at2"/>
<dbReference type="PhylomeDB" id="Q7ND43"/>
<dbReference type="UniPathway" id="UPA00664"/>
<dbReference type="Proteomes" id="UP000000557">
    <property type="component" value="Chromosome"/>
</dbReference>
<dbReference type="GO" id="GO:0005886">
    <property type="term" value="C:plasma membrane"/>
    <property type="evidence" value="ECO:0000318"/>
    <property type="project" value="GO_Central"/>
</dbReference>
<dbReference type="GO" id="GO:0008961">
    <property type="term" value="F:phosphatidylglycerol-prolipoprotein diacylglyceryl transferase activity"/>
    <property type="evidence" value="ECO:0000318"/>
    <property type="project" value="GO_Central"/>
</dbReference>
<dbReference type="GO" id="GO:0042158">
    <property type="term" value="P:lipoprotein biosynthetic process"/>
    <property type="evidence" value="ECO:0000318"/>
    <property type="project" value="GO_Central"/>
</dbReference>
<dbReference type="HAMAP" id="MF_01147">
    <property type="entry name" value="Lgt"/>
    <property type="match status" value="1"/>
</dbReference>
<dbReference type="InterPro" id="IPR001640">
    <property type="entry name" value="Lgt"/>
</dbReference>
<dbReference type="NCBIfam" id="TIGR00544">
    <property type="entry name" value="lgt"/>
    <property type="match status" value="1"/>
</dbReference>
<dbReference type="PANTHER" id="PTHR30589:SF0">
    <property type="entry name" value="PHOSPHATIDYLGLYCEROL--PROLIPOPROTEIN DIACYLGLYCERYL TRANSFERASE"/>
    <property type="match status" value="1"/>
</dbReference>
<dbReference type="PANTHER" id="PTHR30589">
    <property type="entry name" value="PROLIPOPROTEIN DIACYLGLYCERYL TRANSFERASE"/>
    <property type="match status" value="1"/>
</dbReference>
<dbReference type="Pfam" id="PF01790">
    <property type="entry name" value="LGT"/>
    <property type="match status" value="1"/>
</dbReference>
<dbReference type="PROSITE" id="PS01311">
    <property type="entry name" value="LGT"/>
    <property type="match status" value="1"/>
</dbReference>
<comment type="function">
    <text evidence="1">Catalyzes the transfer of the diacylglyceryl group from phosphatidylglycerol to the sulfhydryl group of the N-terminal cysteine of a prolipoprotein, the first step in the formation of mature lipoproteins.</text>
</comment>
<comment type="catalytic activity">
    <reaction evidence="1">
        <text>L-cysteinyl-[prolipoprotein] + a 1,2-diacyl-sn-glycero-3-phospho-(1'-sn-glycerol) = an S-1,2-diacyl-sn-glyceryl-L-cysteinyl-[prolipoprotein] + sn-glycerol 1-phosphate + H(+)</text>
        <dbReference type="Rhea" id="RHEA:56712"/>
        <dbReference type="Rhea" id="RHEA-COMP:14679"/>
        <dbReference type="Rhea" id="RHEA-COMP:14680"/>
        <dbReference type="ChEBI" id="CHEBI:15378"/>
        <dbReference type="ChEBI" id="CHEBI:29950"/>
        <dbReference type="ChEBI" id="CHEBI:57685"/>
        <dbReference type="ChEBI" id="CHEBI:64716"/>
        <dbReference type="ChEBI" id="CHEBI:140658"/>
        <dbReference type="EC" id="2.5.1.145"/>
    </reaction>
</comment>
<comment type="pathway">
    <text evidence="1">Protein modification; lipoprotein biosynthesis (diacylglyceryl transfer).</text>
</comment>
<comment type="subcellular location">
    <subcellularLocation>
        <location evidence="1">Cell inner membrane</location>
        <topology evidence="1">Multi-pass membrane protein</topology>
    </subcellularLocation>
</comment>
<comment type="similarity">
    <text evidence="1">Belongs to the Lgt family.</text>
</comment>
<gene>
    <name evidence="1" type="primary">lgt</name>
    <name type="ordered locus">gll4393</name>
</gene>
<organism>
    <name type="scientific">Gloeobacter violaceus (strain ATCC 29082 / PCC 7421)</name>
    <dbReference type="NCBI Taxonomy" id="251221"/>
    <lineage>
        <taxon>Bacteria</taxon>
        <taxon>Bacillati</taxon>
        <taxon>Cyanobacteriota</taxon>
        <taxon>Cyanophyceae</taxon>
        <taxon>Gloeobacterales</taxon>
        <taxon>Gloeobacteraceae</taxon>
        <taxon>Gloeobacter</taxon>
    </lineage>
</organism>
<reference key="1">
    <citation type="journal article" date="2003" name="DNA Res.">
        <title>Complete genome structure of Gloeobacter violaceus PCC 7421, a cyanobacterium that lacks thylakoids.</title>
        <authorList>
            <person name="Nakamura Y."/>
            <person name="Kaneko T."/>
            <person name="Sato S."/>
            <person name="Mimuro M."/>
            <person name="Miyashita H."/>
            <person name="Tsuchiya T."/>
            <person name="Sasamoto S."/>
            <person name="Watanabe A."/>
            <person name="Kawashima K."/>
            <person name="Kishida Y."/>
            <person name="Kiyokawa C."/>
            <person name="Kohara M."/>
            <person name="Matsumoto M."/>
            <person name="Matsuno A."/>
            <person name="Nakazaki N."/>
            <person name="Shimpo S."/>
            <person name="Takeuchi C."/>
            <person name="Yamada M."/>
            <person name="Tabata S."/>
        </authorList>
    </citation>
    <scope>NUCLEOTIDE SEQUENCE [LARGE SCALE GENOMIC DNA]</scope>
    <source>
        <strain>ATCC 29082 / PCC 7421</strain>
    </source>
</reference>
<proteinExistence type="inferred from homology"/>
<evidence type="ECO:0000255" key="1">
    <source>
        <dbReference type="HAMAP-Rule" id="MF_01147"/>
    </source>
</evidence>
<name>LGT_GLOVI</name>
<protein>
    <recommendedName>
        <fullName evidence="1">Phosphatidylglycerol--prolipoprotein diacylglyceryl transferase</fullName>
        <ecNumber evidence="1">2.5.1.145</ecNumber>
    </recommendedName>
</protein>
<accession>Q7ND43</accession>
<keyword id="KW-0997">Cell inner membrane</keyword>
<keyword id="KW-1003">Cell membrane</keyword>
<keyword id="KW-0472">Membrane</keyword>
<keyword id="KW-1185">Reference proteome</keyword>
<keyword id="KW-0808">Transferase</keyword>
<keyword id="KW-0812">Transmembrane</keyword>
<keyword id="KW-1133">Transmembrane helix</keyword>